<dbReference type="Proteomes" id="UP001155700">
    <property type="component" value="Unplaced"/>
</dbReference>
<dbReference type="GO" id="GO:0009543">
    <property type="term" value="C:chloroplast thylakoid lumen"/>
    <property type="evidence" value="ECO:0007669"/>
    <property type="project" value="UniProtKB-SubCell"/>
</dbReference>
<accession>P82681</accession>
<comment type="subcellular location">
    <subcellularLocation>
        <location>Plastid</location>
        <location>Chloroplast thylakoid lumen</location>
    </subcellularLocation>
</comment>
<sequence>LDEFRVYSDDANKYKISIPQD</sequence>
<feature type="chain" id="PRO_0000072554" description="Thylakoid lumenal 13.8 kDa protein">
    <location>
        <begin position="1"/>
        <end position="21" status="greater than"/>
    </location>
</feature>
<feature type="non-terminal residue">
    <location>
        <position position="21"/>
    </location>
</feature>
<keyword id="KW-0150">Chloroplast</keyword>
<keyword id="KW-0903">Direct protein sequencing</keyword>
<keyword id="KW-0934">Plastid</keyword>
<keyword id="KW-1185">Reference proteome</keyword>
<keyword id="KW-0793">Thylakoid</keyword>
<proteinExistence type="evidence at protein level"/>
<protein>
    <recommendedName>
        <fullName>Thylakoid lumenal 13.8 kDa protein</fullName>
    </recommendedName>
    <alternativeName>
        <fullName>P13.8</fullName>
    </alternativeName>
</protein>
<organism>
    <name type="scientific">Spinacia oleracea</name>
    <name type="common">Spinach</name>
    <dbReference type="NCBI Taxonomy" id="3562"/>
    <lineage>
        <taxon>Eukaryota</taxon>
        <taxon>Viridiplantae</taxon>
        <taxon>Streptophyta</taxon>
        <taxon>Embryophyta</taxon>
        <taxon>Tracheophyta</taxon>
        <taxon>Spermatophyta</taxon>
        <taxon>Magnoliopsida</taxon>
        <taxon>eudicotyledons</taxon>
        <taxon>Gunneridae</taxon>
        <taxon>Pentapetalae</taxon>
        <taxon>Caryophyllales</taxon>
        <taxon>Chenopodiaceae</taxon>
        <taxon>Chenopodioideae</taxon>
        <taxon>Anserineae</taxon>
        <taxon>Spinacia</taxon>
    </lineage>
</organism>
<name>TL13_SPIOL</name>
<reference key="1">
    <citation type="submission" date="2000-07" db="UniProtKB">
        <authorList>
            <person name="Kieselbach T."/>
            <person name="Pettersson U."/>
            <person name="Bystedt M."/>
            <person name="Schroeder W.P."/>
        </authorList>
    </citation>
    <scope>PROTEIN SEQUENCE</scope>
</reference>